<keyword id="KW-0002">3D-structure</keyword>
<keyword id="KW-0877">Alternative promoter usage</keyword>
<keyword id="KW-1035">Host cytoplasm</keyword>
<keyword id="KW-1048">Host nucleus</keyword>
<keyword id="KW-0378">Hydrolase</keyword>
<keyword id="KW-0597">Phosphoprotein</keyword>
<keyword id="KW-0645">Protease</keyword>
<keyword id="KW-1185">Reference proteome</keyword>
<keyword id="KW-0720">Serine protease</keyword>
<keyword id="KW-0118">Viral capsid assembly</keyword>
<keyword id="KW-1188">Viral release from host cell</keyword>
<comment type="function">
    <molecule>Capsid scaffolding protein</molecule>
    <text evidence="2">Acts as a scaffold protein by binding major capsid protein in the cytoplasm, inducing the nuclear localization of both proteins. Multimerizes in the nucleus such as major capsid protein forms the icosahedral T=16 capsid. Autocatalytic cleavage releases the assembly protein, and subsequently abolishes interaction with major capsid protein. Cleavages products are evicted from the capsid before or during DNA packaging.</text>
</comment>
<comment type="function">
    <molecule>Assemblin</molecule>
    <text evidence="2">Protease that plays an essential role in virion assembly within the nucleus. Catalyzes the cleavage of the assembly protein after formation of the spherical procapsid. By that cleavage, the capsid matures and gains its icosahedral shape. The cleavage sites seem to include -Ala-Ser-, -Ala-Ala-, as well as Ala-Thr bonds. Assemblin and cleavages products are evicted from the capsid before or during DNA packaging.</text>
</comment>
<comment type="function">
    <molecule>Assembly protein</molecule>
    <text evidence="2">Plays a major role in capsid assembly. Acts as a scaffold protein by binding major capsid protein. Multimerizes in the nucleus such as major capsid protein forms the icosahedral T=16 capsid. Cleaved by assemblin after capsid completion. The cleavages products are evicted from the capsid before or during DNA packaging.</text>
</comment>
<comment type="catalytic activity">
    <molecule>Assemblin</molecule>
    <reaction evidence="2">
        <text>Cleaves -Ala-|-Ser- and -Ala-|-Ala- bonds in the scaffold protein.</text>
        <dbReference type="EC" id="3.4.21.97"/>
    </reaction>
</comment>
<comment type="subunit">
    <molecule>Capsid scaffolding protein</molecule>
    <text evidence="2">Homomultimer. Interacts with major capsid protein.</text>
</comment>
<comment type="subunit">
    <molecule>Assemblin</molecule>
    <text evidence="2">Exists in a monomer-dimer equilibrium with the dimer being the active species.</text>
</comment>
<comment type="subunit">
    <molecule>Assembly protein</molecule>
    <text evidence="2">Homomultimer. Interacts with major capsid protein.</text>
</comment>
<comment type="subcellular location">
    <molecule>Capsid scaffolding protein</molecule>
    <subcellularLocation>
        <location evidence="2">Host cytoplasm</location>
    </subcellularLocation>
</comment>
<comment type="subcellular location">
    <molecule>Assemblin</molecule>
    <subcellularLocation>
        <location evidence="2">Host nucleus</location>
    </subcellularLocation>
</comment>
<comment type="subcellular location">
    <molecule>Assembly protein</molecule>
    <subcellularLocation>
        <location evidence="2">Host nucleus</location>
    </subcellularLocation>
</comment>
<comment type="alternative products">
    <event type="alternative promoter"/>
    <isoform>
        <id>P09286-1</id>
        <name>Capsid scaffolding protein</name>
        <name>pPR</name>
        <sequence type="displayed"/>
    </isoform>
    <isoform>
        <id>P09286-2</id>
        <name>pAP</name>
        <name>Assembly protein</name>
        <sequence type="described" ref="VSP_037420"/>
    </isoform>
</comment>
<comment type="domain">
    <text evidence="2">Region of interaction between pPR and pAP is called Amino conserved domain (ACD). The region of interaction with major capsid protein is called carboxyl conserved domain (CCD).</text>
</comment>
<comment type="PTM">
    <molecule>Capsid scaffolding protein</molecule>
    <text evidence="2">Capsid scaffolding protein is cleaved by assemblin after formation of the spherical procapsid. As a result, the capsid obtains its mature, icosahedral shape. Cleavages occur at two or more sites: release (R-site) and maturation (M-site).</text>
</comment>
<comment type="similarity">
    <text evidence="2">Belongs to the herpesviridae capsid scaffolding protein family.</text>
</comment>
<protein>
    <recommendedName>
        <fullName evidence="2">Capsid scaffolding protein</fullName>
    </recommendedName>
    <alternativeName>
        <fullName evidence="2">Protease precursor</fullName>
        <shortName evidence="2">pPR</shortName>
    </alternativeName>
    <component>
        <recommendedName>
            <fullName evidence="2">Assemblin</fullName>
            <ecNumber evidence="2">3.4.21.97</ecNumber>
        </recommendedName>
        <alternativeName>
            <fullName evidence="2">Protease</fullName>
            <shortName evidence="2">Pr</shortName>
        </alternativeName>
    </component>
    <component>
        <recommendedName>
            <fullName evidence="2">Assembly protein</fullName>
            <shortName evidence="2">AP</shortName>
        </recommendedName>
        <alternativeName>
            <fullName evidence="2">Capsid assembly protein</fullName>
        </alternativeName>
    </component>
</protein>
<feature type="chain" id="PRO_0000027269" description="Capsid scaffolding protein">
    <location>
        <begin position="1"/>
        <end position="605"/>
    </location>
</feature>
<feature type="chain" id="PRO_0000027270" description="Assemblin" evidence="2">
    <location>
        <begin position="1"/>
        <end position="236"/>
    </location>
</feature>
<feature type="chain" id="PRO_0000027271" description="Assembly protein" evidence="2">
    <location>
        <begin position="237"/>
        <end position="605"/>
    </location>
</feature>
<feature type="region of interest" description="Interaction with pAP" evidence="2">
    <location>
        <begin position="326"/>
        <end position="344"/>
    </location>
</feature>
<feature type="region of interest" description="Interaction with major capsid protein" evidence="2">
    <location>
        <begin position="585"/>
        <end position="605"/>
    </location>
</feature>
<feature type="active site" description="Charge relay system" evidence="2">
    <location>
        <position position="52"/>
    </location>
</feature>
<feature type="active site" description="Charge relay system" evidence="2">
    <location>
        <position position="120"/>
    </location>
</feature>
<feature type="active site" description="Charge relay system" evidence="2">
    <location>
        <position position="139"/>
    </location>
</feature>
<feature type="site" description="Cleavage; by assemblin; Release site" evidence="2">
    <location>
        <begin position="236"/>
        <end position="237"/>
    </location>
</feature>
<feature type="site" description="Cleavage; by assemblin; Maturation site" evidence="1">
    <location>
        <begin position="578"/>
        <end position="579"/>
    </location>
</feature>
<feature type="splice variant" id="VSP_037420" description="In isoform pAP." evidence="3">
    <location>
        <begin position="1"/>
        <end position="303"/>
    </location>
</feature>
<feature type="strand" evidence="4">
    <location>
        <begin position="13"/>
        <end position="19"/>
    </location>
</feature>
<feature type="turn" evidence="4">
    <location>
        <begin position="22"/>
        <end position="25"/>
    </location>
</feature>
<feature type="turn" evidence="4">
    <location>
        <begin position="27"/>
        <end position="29"/>
    </location>
</feature>
<feature type="helix" evidence="4">
    <location>
        <begin position="33"/>
        <end position="39"/>
    </location>
</feature>
<feature type="strand" evidence="4">
    <location>
        <begin position="47"/>
        <end position="50"/>
    </location>
</feature>
<feature type="strand" evidence="4">
    <location>
        <begin position="57"/>
        <end position="66"/>
    </location>
</feature>
<feature type="strand" evidence="4">
    <location>
        <begin position="68"/>
        <end position="77"/>
    </location>
</feature>
<feature type="helix" evidence="4">
    <location>
        <begin position="80"/>
        <end position="89"/>
    </location>
</feature>
<feature type="helix" evidence="4">
    <location>
        <begin position="97"/>
        <end position="100"/>
    </location>
</feature>
<feature type="helix" evidence="4">
    <location>
        <begin position="106"/>
        <end position="115"/>
    </location>
</feature>
<feature type="strand" evidence="4">
    <location>
        <begin position="118"/>
        <end position="122"/>
    </location>
</feature>
<feature type="strand" evidence="4">
    <location>
        <begin position="139"/>
        <end position="145"/>
    </location>
</feature>
<feature type="strand" evidence="4">
    <location>
        <begin position="154"/>
        <end position="158"/>
    </location>
</feature>
<feature type="helix" evidence="4">
    <location>
        <begin position="159"/>
        <end position="162"/>
    </location>
</feature>
<feature type="strand" evidence="4">
    <location>
        <begin position="167"/>
        <end position="169"/>
    </location>
</feature>
<feature type="helix" evidence="4">
    <location>
        <begin position="171"/>
        <end position="183"/>
    </location>
</feature>
<feature type="helix" evidence="4">
    <location>
        <begin position="195"/>
        <end position="207"/>
    </location>
</feature>
<feature type="turn" evidence="4">
    <location>
        <begin position="208"/>
        <end position="211"/>
    </location>
</feature>
<feature type="helix" evidence="4">
    <location>
        <begin position="215"/>
        <end position="226"/>
    </location>
</feature>
<organism>
    <name type="scientific">Varicella-zoster virus (strain Dumas)</name>
    <name type="common">HHV-3</name>
    <name type="synonym">Human herpesvirus 3</name>
    <dbReference type="NCBI Taxonomy" id="10338"/>
    <lineage>
        <taxon>Viruses</taxon>
        <taxon>Duplodnaviria</taxon>
        <taxon>Heunggongvirae</taxon>
        <taxon>Peploviricota</taxon>
        <taxon>Herviviricetes</taxon>
        <taxon>Herpesvirales</taxon>
        <taxon>Orthoherpesviridae</taxon>
        <taxon>Alphaherpesvirinae</taxon>
        <taxon>Varicellovirus</taxon>
        <taxon>Varicellovirus humanalpha3</taxon>
        <taxon>Human herpesvirus 3</taxon>
    </lineage>
</organism>
<organismHost>
    <name type="scientific">Homo sapiens</name>
    <name type="common">Human</name>
    <dbReference type="NCBI Taxonomy" id="9606"/>
</organismHost>
<proteinExistence type="evidence at protein level"/>
<evidence type="ECO:0000250" key="1">
    <source>
        <dbReference type="UniProtKB" id="P16753"/>
    </source>
</evidence>
<evidence type="ECO:0000255" key="2">
    <source>
        <dbReference type="HAMAP-Rule" id="MF_04008"/>
    </source>
</evidence>
<evidence type="ECO:0000305" key="3"/>
<evidence type="ECO:0007829" key="4">
    <source>
        <dbReference type="PDB" id="1VZV"/>
    </source>
</evidence>
<reference key="1">
    <citation type="journal article" date="1986" name="J. Gen. Virol.">
        <title>The complete DNA sequence of varicella-zoster virus.</title>
        <authorList>
            <person name="Davison A.J."/>
            <person name="Scott J.E."/>
        </authorList>
    </citation>
    <scope>NUCLEOTIDE SEQUENCE [LARGE SCALE GENOMIC DNA]</scope>
</reference>
<reference key="2">
    <citation type="journal article" date="1997" name="Proc. Natl. Acad. Sci. U.S.A.">
        <title>Crystal structure of varicella-zoster virus protease.</title>
        <authorList>
            <person name="Qiu X."/>
            <person name="Janson C.A."/>
            <person name="Culp J.S."/>
            <person name="Richardson S.B."/>
            <person name="Debouck C."/>
            <person name="Smith W.W."/>
            <person name="Abdel-Meguid S.S."/>
        </authorList>
    </citation>
    <scope>X-RAY CRYSTALLOGRAPHY (3.0 ANGSTROMS) OF 11-231</scope>
</reference>
<accession>P09286</accession>
<accession>Q65ZF9</accession>
<sequence>MAAEADEENCEALYVAGYLALYSKDEGELNITPEIVRSALPPTSKIPINIDHRKDCVVGEVIAIIEDIRGPFFLGIVRCPQLHAVLFEAAHSNFFGNRDSVLSPLERALYLVTNYLPSVSLSSKRLSPNEIPDGNFFTHVALCVVGRRVGTVVNYDCTPESSIEPFRVLSMESKARLLSLVKDYAGLNKVWKVSEDKLAKVLLSTAVNNMLLRDRWDVVAKRRREAGIMGHVYLQASTGYGLARITNVNGVESKLPNAGVINATFHPGGPIYDLALGVGESNEDCEKTVPHLKVTQLCRNDSDMASVAGNASNISPQPPSGVPTGGEFVLIPTAYYSQLLTGQTKNPQVSIGAPNNGQYIVGPYGSPHPPAFPPNTGGYGCPPGHFGGPYGFPGYPPPNRLEMQMSAFMNALAAERGIDLQTPCVNFPDKTDVRRPGKRDFKSMDQRELDSFYSGESQMDGEFPSNIYFPGEPTYITHRRRRVSPSYWQRRHRVSNGQHEELAGVVAKLQQEVTELKSQNGTQMPLSHHTNIPEGTRDPRISILLKQLQSVSGLCSSQNTTSTPHTDTVGQDVNAVEASSKAPLIQGSTADDADMFANQMMVGRC</sequence>
<gene>
    <name type="primary">33</name>
</gene>
<name>SCAF_VZVD</name>
<dbReference type="EC" id="3.4.21.97" evidence="2"/>
<dbReference type="EMBL" id="X04370">
    <property type="protein sequence ID" value="CAA27916.1"/>
    <property type="molecule type" value="Genomic_DNA"/>
</dbReference>
<dbReference type="EMBL" id="X04370">
    <property type="protein sequence ID" value="CAH19069.1"/>
    <property type="molecule type" value="Genomic_DNA"/>
</dbReference>
<dbReference type="PIR" id="G27214">
    <property type="entry name" value="WZBE33"/>
</dbReference>
<dbReference type="PDB" id="1VZV">
    <property type="method" value="X-ray"/>
    <property type="resolution" value="3.00 A"/>
    <property type="chains" value="A=11-231"/>
</dbReference>
<dbReference type="PDBsum" id="1VZV"/>
<dbReference type="SMR" id="P09286"/>
<dbReference type="MEROPS" id="S21.005"/>
<dbReference type="EvolutionaryTrace" id="P09286"/>
<dbReference type="Proteomes" id="UP000002602">
    <property type="component" value="Genome"/>
</dbReference>
<dbReference type="GO" id="GO:0030430">
    <property type="term" value="C:host cell cytoplasm"/>
    <property type="evidence" value="ECO:0007669"/>
    <property type="project" value="UniProtKB-SubCell"/>
</dbReference>
<dbReference type="GO" id="GO:0042025">
    <property type="term" value="C:host cell nucleus"/>
    <property type="evidence" value="ECO:0007669"/>
    <property type="project" value="UniProtKB-SubCell"/>
</dbReference>
<dbReference type="GO" id="GO:0042802">
    <property type="term" value="F:identical protein binding"/>
    <property type="evidence" value="ECO:0007669"/>
    <property type="project" value="UniProtKB-UniRule"/>
</dbReference>
<dbReference type="GO" id="GO:0004252">
    <property type="term" value="F:serine-type endopeptidase activity"/>
    <property type="evidence" value="ECO:0007669"/>
    <property type="project" value="UniProtKB-UniRule"/>
</dbReference>
<dbReference type="GO" id="GO:0039708">
    <property type="term" value="P:nuclear capsid assembly"/>
    <property type="evidence" value="ECO:0000314"/>
    <property type="project" value="UniProtKB"/>
</dbReference>
<dbReference type="GO" id="GO:0006508">
    <property type="term" value="P:proteolysis"/>
    <property type="evidence" value="ECO:0007669"/>
    <property type="project" value="UniProtKB-KW"/>
</dbReference>
<dbReference type="GO" id="GO:0019076">
    <property type="term" value="P:viral release from host cell"/>
    <property type="evidence" value="ECO:0007669"/>
    <property type="project" value="UniProtKB-UniRule"/>
</dbReference>
<dbReference type="FunFam" id="3.20.16.10:FF:000001">
    <property type="entry name" value="Capsid scaffolding protein"/>
    <property type="match status" value="1"/>
</dbReference>
<dbReference type="Gene3D" id="3.20.16.10">
    <property type="entry name" value="Herpesvirus/Caudovirus protease domain"/>
    <property type="match status" value="1"/>
</dbReference>
<dbReference type="HAMAP" id="MF_04008">
    <property type="entry name" value="HSV_SCAF"/>
    <property type="match status" value="1"/>
</dbReference>
<dbReference type="InterPro" id="IPR035443">
    <property type="entry name" value="Herpes_virus_sf"/>
</dbReference>
<dbReference type="InterPro" id="IPR001847">
    <property type="entry name" value="Peptidase_S21"/>
</dbReference>
<dbReference type="Pfam" id="PF00716">
    <property type="entry name" value="Peptidase_S21"/>
    <property type="match status" value="1"/>
</dbReference>
<dbReference type="PRINTS" id="PR00236">
    <property type="entry name" value="HSVCAPSIDP40"/>
</dbReference>
<dbReference type="SUPFAM" id="SSF50789">
    <property type="entry name" value="Herpes virus serine proteinase, assemblin"/>
    <property type="match status" value="1"/>
</dbReference>